<dbReference type="EC" id="6.6.1.1"/>
<dbReference type="EMBL" id="EF065604">
    <property type="protein sequence ID" value="ABK58606.1"/>
    <property type="molecule type" value="Genomic_DNA"/>
</dbReference>
<dbReference type="EMBL" id="EF065605">
    <property type="protein sequence ID" value="ABK58607.1"/>
    <property type="molecule type" value="mRNA"/>
</dbReference>
<dbReference type="EMBL" id="AC135595">
    <property type="protein sequence ID" value="AAT77900.1"/>
    <property type="molecule type" value="Genomic_DNA"/>
</dbReference>
<dbReference type="EMBL" id="AC137507">
    <property type="protein sequence ID" value="AAP73850.1"/>
    <property type="status" value="ALT_SEQ"/>
    <property type="molecule type" value="Genomic_DNA"/>
</dbReference>
<dbReference type="EMBL" id="DP000009">
    <property type="protein sequence ID" value="ABF99490.1"/>
    <property type="molecule type" value="Genomic_DNA"/>
</dbReference>
<dbReference type="EMBL" id="AP008209">
    <property type="protein sequence ID" value="BAF13582.1"/>
    <property type="molecule type" value="Genomic_DNA"/>
</dbReference>
<dbReference type="EMBL" id="AP014959">
    <property type="protein sequence ID" value="BAS87000.1"/>
    <property type="molecule type" value="Genomic_DNA"/>
</dbReference>
<dbReference type="EMBL" id="CM000140">
    <property type="protein sequence ID" value="EEE60156.1"/>
    <property type="molecule type" value="Genomic_DNA"/>
</dbReference>
<dbReference type="EMBL" id="AK072463">
    <property type="protein sequence ID" value="BAG92983.1"/>
    <property type="molecule type" value="mRNA"/>
</dbReference>
<dbReference type="RefSeq" id="XP_015631084.1">
    <property type="nucleotide sequence ID" value="XM_015775598.1"/>
</dbReference>
<dbReference type="SMR" id="Q6ATS0"/>
<dbReference type="BioGRID" id="803574">
    <property type="interactions" value="1"/>
</dbReference>
<dbReference type="FunCoup" id="Q6ATS0">
    <property type="interactions" value="715"/>
</dbReference>
<dbReference type="MINT" id="Q6ATS0"/>
<dbReference type="STRING" id="39947.Q6ATS0"/>
<dbReference type="PaxDb" id="39947-Q6ATS0"/>
<dbReference type="EnsemblPlants" id="Os03t0811100-01">
    <property type="protein sequence ID" value="Os03t0811100-01"/>
    <property type="gene ID" value="Os03g0811100"/>
</dbReference>
<dbReference type="Gramene" id="Os03t0811100-01">
    <property type="protein sequence ID" value="Os03t0811100-01"/>
    <property type="gene ID" value="Os03g0811100"/>
</dbReference>
<dbReference type="KEGG" id="dosa:Os03g0811100"/>
<dbReference type="eggNOG" id="ENOG502QU3C">
    <property type="taxonomic scope" value="Eukaryota"/>
</dbReference>
<dbReference type="HOGENOM" id="CLU_016684_6_2_1"/>
<dbReference type="InParanoid" id="Q6ATS0"/>
<dbReference type="OMA" id="YYHLPKA"/>
<dbReference type="OrthoDB" id="299997at2759"/>
<dbReference type="UniPathway" id="UPA00668"/>
<dbReference type="Proteomes" id="UP000000763">
    <property type="component" value="Chromosome 3"/>
</dbReference>
<dbReference type="Proteomes" id="UP000007752">
    <property type="component" value="Chromosome 3"/>
</dbReference>
<dbReference type="Proteomes" id="UP000059680">
    <property type="component" value="Chromosome 3"/>
</dbReference>
<dbReference type="ExpressionAtlas" id="Q6ATS0">
    <property type="expression patterns" value="baseline and differential"/>
</dbReference>
<dbReference type="GO" id="GO:0009507">
    <property type="term" value="C:chloroplast"/>
    <property type="evidence" value="ECO:0007669"/>
    <property type="project" value="UniProtKB-SubCell"/>
</dbReference>
<dbReference type="GO" id="GO:0005524">
    <property type="term" value="F:ATP binding"/>
    <property type="evidence" value="ECO:0007669"/>
    <property type="project" value="UniProtKB-KW"/>
</dbReference>
<dbReference type="GO" id="GO:0016887">
    <property type="term" value="F:ATP hydrolysis activity"/>
    <property type="evidence" value="ECO:0007669"/>
    <property type="project" value="InterPro"/>
</dbReference>
<dbReference type="GO" id="GO:0016851">
    <property type="term" value="F:magnesium chelatase activity"/>
    <property type="evidence" value="ECO:0007669"/>
    <property type="project" value="UniProtKB-EC"/>
</dbReference>
<dbReference type="GO" id="GO:0015995">
    <property type="term" value="P:chlorophyll biosynthetic process"/>
    <property type="evidence" value="ECO:0007669"/>
    <property type="project" value="UniProtKB-UniPathway"/>
</dbReference>
<dbReference type="GO" id="GO:0015979">
    <property type="term" value="P:photosynthesis"/>
    <property type="evidence" value="ECO:0007669"/>
    <property type="project" value="UniProtKB-KW"/>
</dbReference>
<dbReference type="CDD" id="cd00009">
    <property type="entry name" value="AAA"/>
    <property type="match status" value="1"/>
</dbReference>
<dbReference type="CDD" id="cd01451">
    <property type="entry name" value="vWA_Magnesium_chelatase"/>
    <property type="match status" value="1"/>
</dbReference>
<dbReference type="FunFam" id="3.40.50.410:FF:000079">
    <property type="entry name" value="Mg-protoporphyrin IX chelatase"/>
    <property type="match status" value="1"/>
</dbReference>
<dbReference type="Gene3D" id="1.10.8.80">
    <property type="entry name" value="Magnesium chelatase subunit I, C-Terminal domain"/>
    <property type="match status" value="1"/>
</dbReference>
<dbReference type="Gene3D" id="3.40.50.300">
    <property type="entry name" value="P-loop containing nucleotide triphosphate hydrolases"/>
    <property type="match status" value="1"/>
</dbReference>
<dbReference type="Gene3D" id="3.40.50.410">
    <property type="entry name" value="von Willebrand factor, type A domain"/>
    <property type="match status" value="1"/>
</dbReference>
<dbReference type="InterPro" id="IPR003593">
    <property type="entry name" value="AAA+_ATPase"/>
</dbReference>
<dbReference type="InterPro" id="IPR041702">
    <property type="entry name" value="BchD/ChlD_VWA"/>
</dbReference>
<dbReference type="InterPro" id="IPR041628">
    <property type="entry name" value="ChlI/MoxR_AAA_lid"/>
</dbReference>
<dbReference type="InterPro" id="IPR011776">
    <property type="entry name" value="Mg_chelatase_ATPase-dsu"/>
</dbReference>
<dbReference type="InterPro" id="IPR000523">
    <property type="entry name" value="Mg_chelatse_chII-like_cat_dom"/>
</dbReference>
<dbReference type="InterPro" id="IPR027417">
    <property type="entry name" value="P-loop_NTPase"/>
</dbReference>
<dbReference type="InterPro" id="IPR002035">
    <property type="entry name" value="VWF_A"/>
</dbReference>
<dbReference type="InterPro" id="IPR036465">
    <property type="entry name" value="vWFA_dom_sf"/>
</dbReference>
<dbReference type="NCBIfam" id="TIGR02031">
    <property type="entry name" value="BchD-ChlD"/>
    <property type="match status" value="1"/>
</dbReference>
<dbReference type="PANTHER" id="PTHR43473">
    <property type="entry name" value="MAGNESIUM-CHELATASE SUBUNIT CHLD, CHLOROPLASTIC"/>
    <property type="match status" value="1"/>
</dbReference>
<dbReference type="PANTHER" id="PTHR43473:SF2">
    <property type="entry name" value="MAGNESIUM-CHELATASE SUBUNIT CHLD, CHLOROPLASTIC"/>
    <property type="match status" value="1"/>
</dbReference>
<dbReference type="Pfam" id="PF17863">
    <property type="entry name" value="AAA_lid_2"/>
    <property type="match status" value="1"/>
</dbReference>
<dbReference type="Pfam" id="PF01078">
    <property type="entry name" value="Mg_chelatase"/>
    <property type="match status" value="1"/>
</dbReference>
<dbReference type="Pfam" id="PF13519">
    <property type="entry name" value="VWA_2"/>
    <property type="match status" value="1"/>
</dbReference>
<dbReference type="SMART" id="SM00382">
    <property type="entry name" value="AAA"/>
    <property type="match status" value="1"/>
</dbReference>
<dbReference type="SMART" id="SM00327">
    <property type="entry name" value="VWA"/>
    <property type="match status" value="1"/>
</dbReference>
<dbReference type="SUPFAM" id="SSF52540">
    <property type="entry name" value="P-loop containing nucleoside triphosphate hydrolases"/>
    <property type="match status" value="1"/>
</dbReference>
<dbReference type="SUPFAM" id="SSF53300">
    <property type="entry name" value="vWA-like"/>
    <property type="match status" value="1"/>
</dbReference>
<dbReference type="PROSITE" id="PS50234">
    <property type="entry name" value="VWFA"/>
    <property type="match status" value="1"/>
</dbReference>
<feature type="transit peptide" description="Chloroplast" evidence="1">
    <location>
        <begin position="1"/>
        <end position="45"/>
    </location>
</feature>
<feature type="chain" id="PRO_0000418768" description="Magnesium-chelatase subunit ChlD, chloroplastic">
    <location>
        <begin position="46"/>
        <end position="754"/>
    </location>
</feature>
<feature type="domain" description="VWFA" evidence="2">
    <location>
        <begin position="553"/>
        <end position="751"/>
    </location>
</feature>
<feature type="region of interest" description="Disordered" evidence="3">
    <location>
        <begin position="1"/>
        <end position="41"/>
    </location>
</feature>
<feature type="region of interest" description="Disordered" evidence="3">
    <location>
        <begin position="397"/>
        <end position="448"/>
    </location>
</feature>
<feature type="region of interest" description="Disordered" evidence="3">
    <location>
        <begin position="665"/>
        <end position="684"/>
    </location>
</feature>
<feature type="compositionally biased region" description="Low complexity" evidence="3">
    <location>
        <begin position="1"/>
        <end position="14"/>
    </location>
</feature>
<feature type="compositionally biased region" description="Low complexity" evidence="3">
    <location>
        <begin position="24"/>
        <end position="41"/>
    </location>
</feature>
<feature type="compositionally biased region" description="Pro residues" evidence="3">
    <location>
        <begin position="407"/>
        <end position="418"/>
    </location>
</feature>
<feature type="compositionally biased region" description="Acidic residues" evidence="3">
    <location>
        <begin position="421"/>
        <end position="443"/>
    </location>
</feature>
<feature type="mutagenesis site" description="In chl1; yellowish-green leaf phenotype." evidence="4">
    <original>R</original>
    <variation>Q</variation>
    <location>
        <position position="393"/>
    </location>
</feature>
<name>CHLD_ORYSJ</name>
<protein>
    <recommendedName>
        <fullName>Magnesium-chelatase subunit ChlD, chloroplastic</fullName>
        <shortName>Mg-chelatase subunit D</shortName>
        <ecNumber>6.6.1.1</ecNumber>
    </recommendedName>
    <alternativeName>
        <fullName>Mg-protoporphyrin IX chelatase subunit ChlD</fullName>
    </alternativeName>
    <alternativeName>
        <fullName>Protein CHLORINA 1</fullName>
    </alternativeName>
</protein>
<evidence type="ECO:0000255" key="1"/>
<evidence type="ECO:0000255" key="2">
    <source>
        <dbReference type="PROSITE-ProRule" id="PRU00219"/>
    </source>
</evidence>
<evidence type="ECO:0000256" key="3">
    <source>
        <dbReference type="SAM" id="MobiDB-lite"/>
    </source>
</evidence>
<evidence type="ECO:0000269" key="4">
    <source>
    </source>
</evidence>
<evidence type="ECO:0000269" key="5">
    <source>
    </source>
</evidence>
<evidence type="ECO:0000305" key="6"/>
<evidence type="ECO:0000305" key="7">
    <source>
    </source>
</evidence>
<accession>Q6ATS0</accession>
<accession>A0A0P0W4J4</accession>
<accession>Q7XZG7</accession>
<organism>
    <name type="scientific">Oryza sativa subsp. japonica</name>
    <name type="common">Rice</name>
    <dbReference type="NCBI Taxonomy" id="39947"/>
    <lineage>
        <taxon>Eukaryota</taxon>
        <taxon>Viridiplantae</taxon>
        <taxon>Streptophyta</taxon>
        <taxon>Embryophyta</taxon>
        <taxon>Tracheophyta</taxon>
        <taxon>Spermatophyta</taxon>
        <taxon>Magnoliopsida</taxon>
        <taxon>Liliopsida</taxon>
        <taxon>Poales</taxon>
        <taxon>Poaceae</taxon>
        <taxon>BOP clade</taxon>
        <taxon>Oryzoideae</taxon>
        <taxon>Oryzeae</taxon>
        <taxon>Oryzinae</taxon>
        <taxon>Oryza</taxon>
        <taxon>Oryza sativa</taxon>
    </lineage>
</organism>
<comment type="function">
    <text evidence="4 5">Involved in chlorophyll biosynthesis. Catalyzes the insertion of magnesium ion into protoporphyrin IX to yield Mg-protoporphyrin IX. The reaction takes place in two steps, with an ATP-dependent activation followed by an ATP-dependent chelation step.</text>
</comment>
<comment type="catalytic activity">
    <reaction>
        <text>protoporphyrin IX + Mg(2+) + ATP + H2O = Mg-protoporphyrin IX + ADP + phosphate + 3 H(+)</text>
        <dbReference type="Rhea" id="RHEA:13961"/>
        <dbReference type="ChEBI" id="CHEBI:15377"/>
        <dbReference type="ChEBI" id="CHEBI:15378"/>
        <dbReference type="ChEBI" id="CHEBI:18420"/>
        <dbReference type="ChEBI" id="CHEBI:30616"/>
        <dbReference type="ChEBI" id="CHEBI:43474"/>
        <dbReference type="ChEBI" id="CHEBI:57306"/>
        <dbReference type="ChEBI" id="CHEBI:60492"/>
        <dbReference type="ChEBI" id="CHEBI:456216"/>
        <dbReference type="EC" id="6.6.1.1"/>
    </reaction>
</comment>
<comment type="pathway">
    <text>Porphyrin-containing compound metabolism; chlorophyll biosynthesis.</text>
</comment>
<comment type="subunit">
    <text evidence="4">The magnesium chelatase complex is a heterotrimer consisting of subunits CHLI, CHLD and CHLH.</text>
</comment>
<comment type="subcellular location">
    <subcellularLocation>
        <location evidence="7">Plastid</location>
        <location evidence="7">Chloroplast</location>
    </subcellularLocation>
</comment>
<comment type="disruption phenotype">
    <text evidence="4">Homozygous KO plants are chlorotic lethal.</text>
</comment>
<comment type="similarity">
    <text evidence="6">Belongs to the Mg-chelatase subunits D/I family.</text>
</comment>
<comment type="sequence caution" evidence="6">
    <conflict type="erroneous gene model prediction">
        <sequence resource="EMBL-CDS" id="AAP73850"/>
    </conflict>
</comment>
<proteinExistence type="evidence at protein level"/>
<gene>
    <name type="primary">CHLD</name>
    <name type="synonym">CHL1</name>
    <name type="ordered locus">Os03g0811100</name>
    <name type="ordered locus">LOC_Os03g59640</name>
    <name type="ORF">OsJ_13066</name>
    <name type="ORF">OSJNBa0028F23.2</name>
    <name type="ORF">OSJNBb0033J23.6</name>
</gene>
<reference key="1">
    <citation type="journal article" date="2006" name="Plant Mol. Biol.">
        <title>Rice Chlorina-1 and Chlorina-9 encode ChlD and ChlI subunits of Mg-chelatase, a key enzyme for chlorophyll synthesis and chloroplast development.</title>
        <authorList>
            <person name="Zhang H."/>
            <person name="Li J."/>
            <person name="Yoo J.H."/>
            <person name="Yoo S.C."/>
            <person name="Cho S.H."/>
            <person name="Koh H.J."/>
            <person name="Seo H.S."/>
            <person name="Paek N.C."/>
        </authorList>
    </citation>
    <scope>NUCLEOTIDE SEQUENCE [GENOMIC DNA / MRNA]</scope>
    <scope>FUNCTION</scope>
    <scope>SUBCELLULAR LOCATION</scope>
    <scope>SUBUNIT</scope>
    <scope>MUTAGENESIS OF ARG-393</scope>
    <scope>DISRUPTION PHENOTYPE</scope>
</reference>
<reference key="2">
    <citation type="journal article" date="2005" name="Genome Res.">
        <title>Sequence, annotation, and analysis of synteny between rice chromosome 3 and diverged grass species.</title>
        <authorList>
            <consortium name="The rice chromosome 3 sequencing consortium"/>
            <person name="Buell C.R."/>
            <person name="Yuan Q."/>
            <person name="Ouyang S."/>
            <person name="Liu J."/>
            <person name="Zhu W."/>
            <person name="Wang A."/>
            <person name="Maiti R."/>
            <person name="Haas B."/>
            <person name="Wortman J."/>
            <person name="Pertea M."/>
            <person name="Jones K.M."/>
            <person name="Kim M."/>
            <person name="Overton L."/>
            <person name="Tsitrin T."/>
            <person name="Fadrosh D."/>
            <person name="Bera J."/>
            <person name="Weaver B."/>
            <person name="Jin S."/>
            <person name="Johri S."/>
            <person name="Reardon M."/>
            <person name="Webb K."/>
            <person name="Hill J."/>
            <person name="Moffat K."/>
            <person name="Tallon L."/>
            <person name="Van Aken S."/>
            <person name="Lewis M."/>
            <person name="Utterback T."/>
            <person name="Feldblyum T."/>
            <person name="Zismann V."/>
            <person name="Iobst S."/>
            <person name="Hsiao J."/>
            <person name="de Vazeille A.R."/>
            <person name="Salzberg S.L."/>
            <person name="White O."/>
            <person name="Fraser C.M."/>
            <person name="Yu Y."/>
            <person name="Kim H."/>
            <person name="Rambo T."/>
            <person name="Currie J."/>
            <person name="Collura K."/>
            <person name="Kernodle-Thompson S."/>
            <person name="Wei F."/>
            <person name="Kudrna K."/>
            <person name="Ammiraju J.S.S."/>
            <person name="Luo M."/>
            <person name="Goicoechea J.L."/>
            <person name="Wing R.A."/>
            <person name="Henry D."/>
            <person name="Oates R."/>
            <person name="Palmer M."/>
            <person name="Pries G."/>
            <person name="Saski C."/>
            <person name="Simmons J."/>
            <person name="Soderlund C."/>
            <person name="Nelson W."/>
            <person name="de la Bastide M."/>
            <person name="Spiegel L."/>
            <person name="Nascimento L."/>
            <person name="Huang E."/>
            <person name="Preston R."/>
            <person name="Zutavern T."/>
            <person name="Palmer L."/>
            <person name="O'Shaughnessy A."/>
            <person name="Dike S."/>
            <person name="McCombie W.R."/>
            <person name="Minx P."/>
            <person name="Cordum H."/>
            <person name="Wilson R."/>
            <person name="Jin W."/>
            <person name="Lee H.R."/>
            <person name="Jiang J."/>
            <person name="Jackson S."/>
        </authorList>
    </citation>
    <scope>NUCLEOTIDE SEQUENCE [LARGE SCALE GENOMIC DNA]</scope>
    <source>
        <strain>cv. Nipponbare</strain>
    </source>
</reference>
<reference key="3">
    <citation type="journal article" date="2005" name="Nature">
        <title>The map-based sequence of the rice genome.</title>
        <authorList>
            <consortium name="International rice genome sequencing project (IRGSP)"/>
        </authorList>
    </citation>
    <scope>NUCLEOTIDE SEQUENCE [LARGE SCALE GENOMIC DNA]</scope>
    <source>
        <strain>cv. Nipponbare</strain>
    </source>
</reference>
<reference key="4">
    <citation type="journal article" date="2008" name="Nucleic Acids Res.">
        <title>The rice annotation project database (RAP-DB): 2008 update.</title>
        <authorList>
            <consortium name="The rice annotation project (RAP)"/>
        </authorList>
    </citation>
    <scope>GENOME REANNOTATION</scope>
    <source>
        <strain>cv. Nipponbare</strain>
    </source>
</reference>
<reference key="5">
    <citation type="journal article" date="2013" name="Rice">
        <title>Improvement of the Oryza sativa Nipponbare reference genome using next generation sequence and optical map data.</title>
        <authorList>
            <person name="Kawahara Y."/>
            <person name="de la Bastide M."/>
            <person name="Hamilton J.P."/>
            <person name="Kanamori H."/>
            <person name="McCombie W.R."/>
            <person name="Ouyang S."/>
            <person name="Schwartz D.C."/>
            <person name="Tanaka T."/>
            <person name="Wu J."/>
            <person name="Zhou S."/>
            <person name="Childs K.L."/>
            <person name="Davidson R.M."/>
            <person name="Lin H."/>
            <person name="Quesada-Ocampo L."/>
            <person name="Vaillancourt B."/>
            <person name="Sakai H."/>
            <person name="Lee S.S."/>
            <person name="Kim J."/>
            <person name="Numa H."/>
            <person name="Itoh T."/>
            <person name="Buell C.R."/>
            <person name="Matsumoto T."/>
        </authorList>
    </citation>
    <scope>GENOME REANNOTATION</scope>
    <source>
        <strain>cv. Nipponbare</strain>
    </source>
</reference>
<reference key="6">
    <citation type="journal article" date="2005" name="PLoS Biol.">
        <title>The genomes of Oryza sativa: a history of duplications.</title>
        <authorList>
            <person name="Yu J."/>
            <person name="Wang J."/>
            <person name="Lin W."/>
            <person name="Li S."/>
            <person name="Li H."/>
            <person name="Zhou J."/>
            <person name="Ni P."/>
            <person name="Dong W."/>
            <person name="Hu S."/>
            <person name="Zeng C."/>
            <person name="Zhang J."/>
            <person name="Zhang Y."/>
            <person name="Li R."/>
            <person name="Xu Z."/>
            <person name="Li S."/>
            <person name="Li X."/>
            <person name="Zheng H."/>
            <person name="Cong L."/>
            <person name="Lin L."/>
            <person name="Yin J."/>
            <person name="Geng J."/>
            <person name="Li G."/>
            <person name="Shi J."/>
            <person name="Liu J."/>
            <person name="Lv H."/>
            <person name="Li J."/>
            <person name="Wang J."/>
            <person name="Deng Y."/>
            <person name="Ran L."/>
            <person name="Shi X."/>
            <person name="Wang X."/>
            <person name="Wu Q."/>
            <person name="Li C."/>
            <person name="Ren X."/>
            <person name="Wang J."/>
            <person name="Wang X."/>
            <person name="Li D."/>
            <person name="Liu D."/>
            <person name="Zhang X."/>
            <person name="Ji Z."/>
            <person name="Zhao W."/>
            <person name="Sun Y."/>
            <person name="Zhang Z."/>
            <person name="Bao J."/>
            <person name="Han Y."/>
            <person name="Dong L."/>
            <person name="Ji J."/>
            <person name="Chen P."/>
            <person name="Wu S."/>
            <person name="Liu J."/>
            <person name="Xiao Y."/>
            <person name="Bu D."/>
            <person name="Tan J."/>
            <person name="Yang L."/>
            <person name="Ye C."/>
            <person name="Zhang J."/>
            <person name="Xu J."/>
            <person name="Zhou Y."/>
            <person name="Yu Y."/>
            <person name="Zhang B."/>
            <person name="Zhuang S."/>
            <person name="Wei H."/>
            <person name="Liu B."/>
            <person name="Lei M."/>
            <person name="Yu H."/>
            <person name="Li Y."/>
            <person name="Xu H."/>
            <person name="Wei S."/>
            <person name="He X."/>
            <person name="Fang L."/>
            <person name="Zhang Z."/>
            <person name="Zhang Y."/>
            <person name="Huang X."/>
            <person name="Su Z."/>
            <person name="Tong W."/>
            <person name="Li J."/>
            <person name="Tong Z."/>
            <person name="Li S."/>
            <person name="Ye J."/>
            <person name="Wang L."/>
            <person name="Fang L."/>
            <person name="Lei T."/>
            <person name="Chen C.-S."/>
            <person name="Chen H.-C."/>
            <person name="Xu Z."/>
            <person name="Li H."/>
            <person name="Huang H."/>
            <person name="Zhang F."/>
            <person name="Xu H."/>
            <person name="Li N."/>
            <person name="Zhao C."/>
            <person name="Li S."/>
            <person name="Dong L."/>
            <person name="Huang Y."/>
            <person name="Li L."/>
            <person name="Xi Y."/>
            <person name="Qi Q."/>
            <person name="Li W."/>
            <person name="Zhang B."/>
            <person name="Hu W."/>
            <person name="Zhang Y."/>
            <person name="Tian X."/>
            <person name="Jiao Y."/>
            <person name="Liang X."/>
            <person name="Jin J."/>
            <person name="Gao L."/>
            <person name="Zheng W."/>
            <person name="Hao B."/>
            <person name="Liu S.-M."/>
            <person name="Wang W."/>
            <person name="Yuan L."/>
            <person name="Cao M."/>
            <person name="McDermott J."/>
            <person name="Samudrala R."/>
            <person name="Wang J."/>
            <person name="Wong G.K.-S."/>
            <person name="Yang H."/>
        </authorList>
    </citation>
    <scope>NUCLEOTIDE SEQUENCE [LARGE SCALE GENOMIC DNA]</scope>
    <source>
        <strain>cv. Nipponbare</strain>
    </source>
</reference>
<reference key="7">
    <citation type="journal article" date="2003" name="Science">
        <title>Collection, mapping, and annotation of over 28,000 cDNA clones from japonica rice.</title>
        <authorList>
            <consortium name="The rice full-length cDNA consortium"/>
        </authorList>
    </citation>
    <scope>NUCLEOTIDE SEQUENCE [LARGE SCALE MRNA]</scope>
    <source>
        <strain>cv. Nipponbare</strain>
    </source>
</reference>
<reference key="8">
    <citation type="journal article" date="2012" name="FEBS Lett.">
        <title>C-terminal residues of oryza sativa GUN4 are required for the activation of the ChlH subunit of magnesium chelatase in chlorophyll synthesis.</title>
        <authorList>
            <person name="Zhou S."/>
            <person name="Sawicki A."/>
            <person name="Willows R.D."/>
            <person name="Luo M."/>
        </authorList>
    </citation>
    <scope>FUNCTION</scope>
</reference>
<sequence>MAMATTALSASLPRLLPPRRRRFPTPSSSSPSAASTSTSRVVRLRAAAASAPSEVLDSTNGAIPSGKGGGGQQYGREYFPLAAVVGQDAIKTALLLGAIDREIGGIAISGKRGTAKTVMARGLHAMLPPIEVVVGSIANADPNYPEEWEEGLANQVQYDADGNLKTEIIKTPFVQIPLGITEDRLIGSVDVEASVKSGTTVFQPGLLAEAHRGVLYVDEINLLDEGVSNLLLNVLTEGVNIVEREGISFRHPCKPLLIATYNPEEGSVREHLLDRIAINLSADLPMSFDDRVAAVDIATQFQESSKEVFKMVEEETEVAKTQIILAREYLKDVAISTEQLKYLVMEAIRGGCQGHRAELYAARVAKCLAAMEGREKVYVDDLKKAVELVILPRSILSDNPQEQQDQQPPPPPPPPPPQDQDSQEDQDEDEEEDQEDDDEENEQQDQQIPEEFIFDAEGGIVDEKLLFFAQQAQRRRGKAGRAKNLIFSSDRGRYIGSMLPKGPIRRLAVDATLRAAAPYQKLRREKDRDKTRKVFVEKTDMRAKRMARKAGALVIFVVDASGSMALNRMQNAKGAALKLLAESYTSRDQVSIIPFRGDFAEVLLPPSRSIAMARNRLEKLPCGGGSPLAHGLSTAVRVGLNAEKSGDVGRIMIVAITDGRANVSLKKSTDPEATSDAPRPSSQELKDEILEVAGKIYKAGISLLVIDTENKFVSTGFAKEIARVAQGKYYYLPNASDAVISAATKTALSDLKSS</sequence>
<keyword id="KW-0067">ATP-binding</keyword>
<keyword id="KW-0149">Chlorophyll biosynthesis</keyword>
<keyword id="KW-0150">Chloroplast</keyword>
<keyword id="KW-0436">Ligase</keyword>
<keyword id="KW-0547">Nucleotide-binding</keyword>
<keyword id="KW-0602">Photosynthesis</keyword>
<keyword id="KW-0934">Plastid</keyword>
<keyword id="KW-1185">Reference proteome</keyword>
<keyword id="KW-0809">Transit peptide</keyword>